<name>SPON1_RAT</name>
<keyword id="KW-0002">3D-structure</keyword>
<keyword id="KW-0130">Cell adhesion</keyword>
<keyword id="KW-1015">Disulfide bond</keyword>
<keyword id="KW-0272">Extracellular matrix</keyword>
<keyword id="KW-0325">Glycoprotein</keyword>
<keyword id="KW-0479">Metal-binding</keyword>
<keyword id="KW-1185">Reference proteome</keyword>
<keyword id="KW-0677">Repeat</keyword>
<keyword id="KW-0964">Secreted</keyword>
<keyword id="KW-0732">Signal</keyword>
<feature type="signal peptide" evidence="2">
    <location>
        <begin position="1"/>
        <end position="28"/>
    </location>
</feature>
<feature type="chain" id="PRO_0000035867" description="Spondin-1">
    <location>
        <begin position="29"/>
        <end position="807"/>
    </location>
</feature>
<feature type="domain" description="Reelin" evidence="4">
    <location>
        <begin position="29"/>
        <end position="194"/>
    </location>
</feature>
<feature type="domain" description="Spondin" evidence="5">
    <location>
        <begin position="195"/>
        <end position="388"/>
    </location>
</feature>
<feature type="domain" description="TSP type-1 1" evidence="3">
    <location>
        <begin position="442"/>
        <end position="495"/>
    </location>
</feature>
<feature type="domain" description="TSP type-1 2" evidence="3">
    <location>
        <begin position="501"/>
        <end position="555"/>
    </location>
</feature>
<feature type="domain" description="TSP type-1 3" evidence="3">
    <location>
        <begin position="558"/>
        <end position="611"/>
    </location>
</feature>
<feature type="domain" description="TSP type-1 4" evidence="3">
    <location>
        <begin position="614"/>
        <end position="666"/>
    </location>
</feature>
<feature type="domain" description="TSP type-1 5" evidence="3">
    <location>
        <begin position="668"/>
        <end position="721"/>
    </location>
</feature>
<feature type="domain" description="TSP type-1 6" evidence="3">
    <location>
        <begin position="754"/>
        <end position="806"/>
    </location>
</feature>
<feature type="region of interest" description="Disordered" evidence="6">
    <location>
        <begin position="732"/>
        <end position="752"/>
    </location>
</feature>
<feature type="compositionally biased region" description="Basic and acidic residues" evidence="6">
    <location>
        <begin position="732"/>
        <end position="746"/>
    </location>
</feature>
<feature type="binding site" evidence="1">
    <location>
        <position position="325"/>
    </location>
    <ligand>
        <name>Ca(2+)</name>
        <dbReference type="ChEBI" id="CHEBI:29108"/>
    </ligand>
</feature>
<feature type="binding site" evidence="1">
    <location>
        <position position="354"/>
    </location>
    <ligand>
        <name>Ca(2+)</name>
        <dbReference type="ChEBI" id="CHEBI:29108"/>
    </ligand>
</feature>
<feature type="binding site" evidence="1">
    <location>
        <position position="358"/>
    </location>
    <ligand>
        <name>Ca(2+)</name>
        <dbReference type="ChEBI" id="CHEBI:29108"/>
    </ligand>
</feature>
<feature type="glycosylation site" description="N-linked (GlcNAc...) asparagine" evidence="2">
    <location>
        <position position="214"/>
    </location>
</feature>
<feature type="glycosylation site" description="N-linked (GlcNAc...) asparagine" evidence="2">
    <location>
        <position position="681"/>
    </location>
</feature>
<feature type="disulfide bond" evidence="3">
    <location>
        <begin position="44"/>
        <end position="128"/>
    </location>
</feature>
<feature type="disulfide bond" evidence="3">
    <location>
        <begin position="156"/>
        <end position="182"/>
    </location>
</feature>
<feature type="disulfide bond" evidence="1">
    <location>
        <begin position="199"/>
        <end position="336"/>
    </location>
</feature>
<feature type="disulfide bond" evidence="1">
    <location>
        <begin position="200"/>
        <end position="340"/>
    </location>
</feature>
<feature type="disulfide bond" evidence="1">
    <location>
        <begin position="202"/>
        <end position="415"/>
    </location>
</feature>
<feature type="disulfide bond" evidence="3 7">
    <location>
        <begin position="443"/>
        <end position="480"/>
    </location>
</feature>
<feature type="disulfide bond" evidence="3 7">
    <location>
        <begin position="454"/>
        <end position="489"/>
    </location>
</feature>
<feature type="disulfide bond" evidence="3 7">
    <location>
        <begin position="459"/>
        <end position="494"/>
    </location>
</feature>
<feature type="disulfide bond" evidence="3">
    <location>
        <begin position="502"/>
        <end position="538"/>
    </location>
</feature>
<feature type="disulfide bond" evidence="3">
    <location>
        <begin position="513"/>
        <end position="517"/>
    </location>
</feature>
<feature type="disulfide bond" evidence="3">
    <location>
        <begin position="548"/>
        <end position="554"/>
    </location>
</feature>
<feature type="disulfide bond" evidence="3">
    <location>
        <begin position="559"/>
        <end position="595"/>
    </location>
</feature>
<feature type="disulfide bond" evidence="3">
    <location>
        <begin position="570"/>
        <end position="574"/>
    </location>
</feature>
<feature type="disulfide bond" evidence="3">
    <location>
        <begin position="605"/>
        <end position="610"/>
    </location>
</feature>
<feature type="disulfide bond" evidence="3 7">
    <location>
        <begin position="615"/>
        <end position="650"/>
    </location>
</feature>
<feature type="disulfide bond" evidence="3 7">
    <location>
        <begin position="626"/>
        <end position="630"/>
    </location>
</feature>
<feature type="disulfide bond" evidence="3 7">
    <location>
        <begin position="660"/>
        <end position="665"/>
    </location>
</feature>
<feature type="strand" evidence="8">
    <location>
        <begin position="441"/>
        <end position="445"/>
    </location>
</feature>
<feature type="strand" evidence="8">
    <location>
        <begin position="457"/>
        <end position="460"/>
    </location>
</feature>
<feature type="strand" evidence="8">
    <location>
        <begin position="470"/>
        <end position="474"/>
    </location>
</feature>
<feature type="strand" evidence="9">
    <location>
        <begin position="629"/>
        <end position="638"/>
    </location>
</feature>
<feature type="strand" evidence="9">
    <location>
        <begin position="655"/>
        <end position="661"/>
    </location>
</feature>
<proteinExistence type="evidence at protein level"/>
<dbReference type="EMBL" id="M88469">
    <property type="protein sequence ID" value="AAA41174.1"/>
    <property type="molecule type" value="mRNA"/>
</dbReference>
<dbReference type="PIR" id="A38152">
    <property type="entry name" value="A38152"/>
</dbReference>
<dbReference type="RefSeq" id="NP_742064.1">
    <property type="nucleotide sequence ID" value="NM_172067.1"/>
</dbReference>
<dbReference type="PDB" id="1SZL">
    <property type="method" value="NMR"/>
    <property type="chains" value="A=441-499"/>
</dbReference>
<dbReference type="PDB" id="1VEX">
    <property type="method" value="NMR"/>
    <property type="chains" value="A=613-666"/>
</dbReference>
<dbReference type="PDB" id="8AY1">
    <property type="method" value="X-ray"/>
    <property type="resolution" value="2.13 A"/>
    <property type="chains" value="A/B=613-666"/>
</dbReference>
<dbReference type="PDBsum" id="1SZL"/>
<dbReference type="PDBsum" id="1VEX"/>
<dbReference type="PDBsum" id="8AY1"/>
<dbReference type="SMR" id="P35446"/>
<dbReference type="FunCoup" id="P35446">
    <property type="interactions" value="304"/>
</dbReference>
<dbReference type="IntAct" id="P35446">
    <property type="interactions" value="1"/>
</dbReference>
<dbReference type="STRING" id="10116.ENSRNOP00000074092"/>
<dbReference type="GlyCosmos" id="P35446">
    <property type="glycosylation" value="2 sites, No reported glycans"/>
</dbReference>
<dbReference type="GlyGen" id="P35446">
    <property type="glycosylation" value="2 sites"/>
</dbReference>
<dbReference type="PhosphoSitePlus" id="P35446"/>
<dbReference type="PaxDb" id="10116-ENSRNOP00000046944"/>
<dbReference type="GeneID" id="64456"/>
<dbReference type="KEGG" id="rno:64456"/>
<dbReference type="UCSC" id="RGD:619918">
    <property type="organism name" value="rat"/>
</dbReference>
<dbReference type="AGR" id="RGD:619918"/>
<dbReference type="CTD" id="10418"/>
<dbReference type="RGD" id="619918">
    <property type="gene designation" value="Spon1"/>
</dbReference>
<dbReference type="eggNOG" id="KOG3539">
    <property type="taxonomic scope" value="Eukaryota"/>
</dbReference>
<dbReference type="InParanoid" id="P35446"/>
<dbReference type="OrthoDB" id="347314at2759"/>
<dbReference type="PhylomeDB" id="P35446"/>
<dbReference type="Reactome" id="R-RNO-5173214">
    <property type="pathway name" value="O-glycosylation of TSR domain-containing proteins"/>
</dbReference>
<dbReference type="EvolutionaryTrace" id="P35446"/>
<dbReference type="PRO" id="PR:P35446"/>
<dbReference type="Proteomes" id="UP000002494">
    <property type="component" value="Unplaced"/>
</dbReference>
<dbReference type="GO" id="GO:0031012">
    <property type="term" value="C:extracellular matrix"/>
    <property type="evidence" value="ECO:0000318"/>
    <property type="project" value="GO_Central"/>
</dbReference>
<dbReference type="GO" id="GO:0005576">
    <property type="term" value="C:extracellular region"/>
    <property type="evidence" value="ECO:0007669"/>
    <property type="project" value="UniProtKB-KW"/>
</dbReference>
<dbReference type="GO" id="GO:0050693">
    <property type="term" value="F:LBD domain binding"/>
    <property type="evidence" value="ECO:0000266"/>
    <property type="project" value="RGD"/>
</dbReference>
<dbReference type="GO" id="GO:0046872">
    <property type="term" value="F:metal ion binding"/>
    <property type="evidence" value="ECO:0007669"/>
    <property type="project" value="UniProtKB-KW"/>
</dbReference>
<dbReference type="GO" id="GO:0007155">
    <property type="term" value="P:cell adhesion"/>
    <property type="evidence" value="ECO:0000318"/>
    <property type="project" value="GO_Central"/>
</dbReference>
<dbReference type="GO" id="GO:1902430">
    <property type="term" value="P:negative regulation of amyloid-beta formation"/>
    <property type="evidence" value="ECO:0000266"/>
    <property type="project" value="RGD"/>
</dbReference>
<dbReference type="GO" id="GO:1902993">
    <property type="term" value="P:positive regulation of amyloid precursor protein catabolic process"/>
    <property type="evidence" value="ECO:0000266"/>
    <property type="project" value="RGD"/>
</dbReference>
<dbReference type="GO" id="GO:0010954">
    <property type="term" value="P:positive regulation of protein processing"/>
    <property type="evidence" value="ECO:0000266"/>
    <property type="project" value="RGD"/>
</dbReference>
<dbReference type="GO" id="GO:0016485">
    <property type="term" value="P:protein processing"/>
    <property type="evidence" value="ECO:0000266"/>
    <property type="project" value="RGD"/>
</dbReference>
<dbReference type="CDD" id="cd08544">
    <property type="entry name" value="Reeler"/>
    <property type="match status" value="1"/>
</dbReference>
<dbReference type="FunFam" id="2.20.100.10:FF:000026">
    <property type="entry name" value="Spondin 1"/>
    <property type="match status" value="1"/>
</dbReference>
<dbReference type="FunFam" id="2.20.100.10:FF:000013">
    <property type="entry name" value="Spondin 1a"/>
    <property type="match status" value="2"/>
</dbReference>
<dbReference type="FunFam" id="2.60.40.2130:FF:000001">
    <property type="entry name" value="Spondin 1a"/>
    <property type="match status" value="1"/>
</dbReference>
<dbReference type="FunFam" id="2.20.100.10:FF:000024">
    <property type="entry name" value="Spondin-1"/>
    <property type="match status" value="1"/>
</dbReference>
<dbReference type="FunFam" id="2.20.100.10:FF:000034">
    <property type="entry name" value="Spondin-1"/>
    <property type="match status" value="1"/>
</dbReference>
<dbReference type="FunFam" id="2.20.100.10:FF:000081">
    <property type="entry name" value="Spondin-1"/>
    <property type="match status" value="1"/>
</dbReference>
<dbReference type="FunFam" id="2.60.40.4060:FF:000002">
    <property type="entry name" value="Spondin-1"/>
    <property type="match status" value="1"/>
</dbReference>
<dbReference type="Gene3D" id="2.60.40.2130">
    <property type="entry name" value="F-spondin domain"/>
    <property type="match status" value="1"/>
</dbReference>
<dbReference type="Gene3D" id="2.60.40.4060">
    <property type="entry name" value="Reeler domain"/>
    <property type="match status" value="1"/>
</dbReference>
<dbReference type="Gene3D" id="2.20.100.10">
    <property type="entry name" value="Thrombospondin type-1 (TSP1) repeat"/>
    <property type="match status" value="6"/>
</dbReference>
<dbReference type="InterPro" id="IPR002861">
    <property type="entry name" value="Reeler_dom"/>
</dbReference>
<dbReference type="InterPro" id="IPR042307">
    <property type="entry name" value="Reeler_sf"/>
</dbReference>
<dbReference type="InterPro" id="IPR051418">
    <property type="entry name" value="Spondin/Thrombospondin_T1"/>
</dbReference>
<dbReference type="InterPro" id="IPR009465">
    <property type="entry name" value="Spondin_N"/>
</dbReference>
<dbReference type="InterPro" id="IPR038678">
    <property type="entry name" value="Spondin_N_sf"/>
</dbReference>
<dbReference type="InterPro" id="IPR000884">
    <property type="entry name" value="TSP1_rpt"/>
</dbReference>
<dbReference type="InterPro" id="IPR036383">
    <property type="entry name" value="TSP1_rpt_sf"/>
</dbReference>
<dbReference type="InterPro" id="IPR044004">
    <property type="entry name" value="TSP1_spondin_dom"/>
</dbReference>
<dbReference type="NCBIfam" id="NF038123">
    <property type="entry name" value="NF038123_dom"/>
    <property type="match status" value="1"/>
</dbReference>
<dbReference type="PANTHER" id="PTHR11311">
    <property type="entry name" value="SPONDIN"/>
    <property type="match status" value="1"/>
</dbReference>
<dbReference type="PANTHER" id="PTHR11311:SF16">
    <property type="entry name" value="SPONDIN-1"/>
    <property type="match status" value="1"/>
</dbReference>
<dbReference type="Pfam" id="PF02014">
    <property type="entry name" value="Reeler"/>
    <property type="match status" value="1"/>
</dbReference>
<dbReference type="Pfam" id="PF06468">
    <property type="entry name" value="Spond_N"/>
    <property type="match status" value="1"/>
</dbReference>
<dbReference type="Pfam" id="PF19028">
    <property type="entry name" value="TSP1_spondin"/>
    <property type="match status" value="1"/>
</dbReference>
<dbReference type="Pfam" id="PF00090">
    <property type="entry name" value="TSP_1"/>
    <property type="match status" value="5"/>
</dbReference>
<dbReference type="SMART" id="SM00209">
    <property type="entry name" value="TSP1"/>
    <property type="match status" value="6"/>
</dbReference>
<dbReference type="SUPFAM" id="SSF82895">
    <property type="entry name" value="TSP-1 type 1 repeat"/>
    <property type="match status" value="6"/>
</dbReference>
<dbReference type="PROSITE" id="PS51019">
    <property type="entry name" value="REELIN"/>
    <property type="match status" value="1"/>
</dbReference>
<dbReference type="PROSITE" id="PS51020">
    <property type="entry name" value="SPONDIN"/>
    <property type="match status" value="1"/>
</dbReference>
<dbReference type="PROSITE" id="PS50092">
    <property type="entry name" value="TSP1"/>
    <property type="match status" value="6"/>
</dbReference>
<organism>
    <name type="scientific">Rattus norvegicus</name>
    <name type="common">Rat</name>
    <dbReference type="NCBI Taxonomy" id="10116"/>
    <lineage>
        <taxon>Eukaryota</taxon>
        <taxon>Metazoa</taxon>
        <taxon>Chordata</taxon>
        <taxon>Craniata</taxon>
        <taxon>Vertebrata</taxon>
        <taxon>Euteleostomi</taxon>
        <taxon>Mammalia</taxon>
        <taxon>Eutheria</taxon>
        <taxon>Euarchontoglires</taxon>
        <taxon>Glires</taxon>
        <taxon>Rodentia</taxon>
        <taxon>Myomorpha</taxon>
        <taxon>Muroidea</taxon>
        <taxon>Muridae</taxon>
        <taxon>Murinae</taxon>
        <taxon>Rattus</taxon>
    </lineage>
</organism>
<protein>
    <recommendedName>
        <fullName>Spondin-1</fullName>
    </recommendedName>
    <alternativeName>
        <fullName>F-spondin</fullName>
    </alternativeName>
</protein>
<evidence type="ECO:0000250" key="1">
    <source>
        <dbReference type="UniProtKB" id="Q9HCB6"/>
    </source>
</evidence>
<evidence type="ECO:0000255" key="2"/>
<evidence type="ECO:0000255" key="3">
    <source>
        <dbReference type="PROSITE-ProRule" id="PRU00210"/>
    </source>
</evidence>
<evidence type="ECO:0000255" key="4">
    <source>
        <dbReference type="PROSITE-ProRule" id="PRU00363"/>
    </source>
</evidence>
<evidence type="ECO:0000255" key="5">
    <source>
        <dbReference type="PROSITE-ProRule" id="PRU00364"/>
    </source>
</evidence>
<evidence type="ECO:0000256" key="6">
    <source>
        <dbReference type="SAM" id="MobiDB-lite"/>
    </source>
</evidence>
<evidence type="ECO:0000269" key="7">
    <source>
    </source>
</evidence>
<evidence type="ECO:0007829" key="8">
    <source>
        <dbReference type="PDB" id="1SZL"/>
    </source>
</evidence>
<evidence type="ECO:0007829" key="9">
    <source>
        <dbReference type="PDB" id="8AY1"/>
    </source>
</evidence>
<accession>P35446</accession>
<reference key="1">
    <citation type="journal article" date="1992" name="Cell">
        <title>F-spondin: a gene expressed at high levels in the floor plate encodes a secreted protein that promotes neural cell adhesion and neurite extension.</title>
        <authorList>
            <person name="Klar A."/>
            <person name="Baldassare M."/>
            <person name="Jessell T.M."/>
        </authorList>
    </citation>
    <scope>NUCLEOTIDE SEQUENCE [MRNA]</scope>
    <source>
        <tissue>Embryonic floor plate</tissue>
    </source>
</reference>
<reference key="2">
    <citation type="journal article" date="2004" name="Proc. Natl. Acad. Sci. U.S.A.">
        <title>Binding of F-spondin to amyloid-beta precursor protein: a candidate amyloid-beta precursor protein ligand that modulates amyloid-beta precursor protein cleavage.</title>
        <authorList>
            <person name="Ho A."/>
            <person name="Suedhof T.C."/>
        </authorList>
    </citation>
    <scope>INTERACTION WITH APP</scope>
</reference>
<reference key="3">
    <citation type="journal article" date="2006" name="Proteins">
        <title>Solution structures of the first and fourth TSR domains of F-spondin.</title>
        <authorList>
            <person name="Paakkonen K."/>
            <person name="Tossavainen H."/>
            <person name="Permi P."/>
            <person name="Rakkolainen H."/>
            <person name="Rauvala H."/>
            <person name="Raulo E."/>
            <person name="Kilpelainen I."/>
            <person name="Guntert P."/>
        </authorList>
    </citation>
    <scope>STRUCTURE BY NMR OF 441-499 AND 613-666</scope>
    <scope>DISULFIDE BONDS</scope>
</reference>
<sequence>MRLSPAPLRLSRGPALLALALPLAAALAFSDETLDKVAKSEGYCSRILRAQGTRREGYTEFSLRVEGDPDFYKPGSSYRVTLSAAPPSYFRGFTLIALKENREGDKEEDHAGTFQIIDEEETQFMSNCPVAVTESTPRRRTRIQVFWIAPPTGTGCVILKASIVQKRIIYFQDEGSLTKKLCEQDPTLDGVTDRPILDCCACGTAKYRLTFYGNWSEKTHPKDYPRRANHWSAIIGGSHSKNYVLWEYGGYASEGVKQVAELGSPVKMEEEIRQQSDEVLTVIKAKAQWPSWQPVNVRAAPSAEFSVDRTRHLMSFLTMMGPSPDWNVGLSAEDLCTKECGWVQKVVQDLIPWDAGTDSGVTYESPNKPTIPQEKIRPLTSLDHPQSPFYDPEGGSITQVARVVIERIARKGEQCNIVPDNVDDIVADLAPEEKDEDDTPETCIYSNWSPWSACSSSTCEKGKRMRQRMLKAQLDLSVPCPDTQDFQPCMGPGCSDEDGSTCTMSEWITWSPCSVSCGMGMRSRERYVKQFPEDGSVCMLPTEETEKCTVNEECSPSSCLVTEWGEWDDCSATCGMGMKKRHRMVKMSPADGSMCKAETSQAEKCMMPECHTIPCLLSPWSEWSDCSVTCGKGMRTRQRMLKSLAELGDCNEDLEQAEKCMLPECPIDCELSEWSQWSECNKSCGKGHMIRTRTIQMEPQFGGAPCPETVQRKKCRARKCLRSPSIQKLRWREARESRRSEQLREESDGEQFPGCRMRPWTAWSECTKLCGGGIQERYMTVKKRFKSSQFTSCKDKKEIRACNVHPC</sequence>
<gene>
    <name type="primary">Spon1</name>
    <name type="synonym">Sponf</name>
</gene>
<comment type="function">
    <text>Cell adhesion protein that promotes the attachment of spinal cord and sensory neuron cells and the outgrowth of neurites in vitro. May contribute to the growth and guidance of axons in both the spinal cord and the PNS.</text>
</comment>
<comment type="subunit">
    <text>Binds to the central extracellular domain of APP and inhibits beta-secretase cleavage of APP.</text>
</comment>
<comment type="subcellular location">
    <subcellularLocation>
        <location>Secreted</location>
        <location>Extracellular space</location>
        <location>Extracellular matrix</location>
    </subcellularLocation>
</comment>
<comment type="tissue specificity">
    <text>Expressed at high levels in the floor plate.</text>
</comment>